<comment type="function">
    <text evidence="1">May act as an adapter that regulates LRP2 function.</text>
</comment>
<comment type="subcellular location">
    <subcellularLocation>
        <location evidence="1">Cytoplasm</location>
    </subcellularLocation>
</comment>
<gene>
    <name type="primary">lrp2bp</name>
</gene>
<accession>Q6IND7</accession>
<keyword id="KW-0963">Cytoplasm</keyword>
<keyword id="KW-1185">Reference proteome</keyword>
<keyword id="KW-0677">Repeat</keyword>
<keyword id="KW-0802">TPR repeat</keyword>
<sequence>MKLRSECLPKSEHGTVLYTLSQLPDFPPCKDQDYSHEDLLQTAETFLKSRIKEGDVQANFLLGQLFFEEGWYEDALLQFEKVKDEDNQALYQAGVMYYDGLGTQEDHRKGVKYMERIVTSDCPSAKHLKYAAAYNLGRAYFEGYGIPHSDKEAERWWLFAADNGNPKASLKAQSVLGMYYSSPPNVDLQKAFLWHSEACGNGSLESQGALGVMYLYGNGIKKNVQAAIECLKEAAERGNVYAQGHLVSCYYQRKLYTKAVELAKKIVSHDNIELLVNTTDCLPSYTVKGVAIATFYFARCLHLGLGIKQDSTAAKQLYSKAAQLDAQVAAELNFDIIYGKI</sequence>
<proteinExistence type="evidence at transcript level"/>
<name>LR2BP_XENLA</name>
<dbReference type="EMBL" id="BC072346">
    <property type="protein sequence ID" value="AAH72346.1"/>
    <property type="molecule type" value="mRNA"/>
</dbReference>
<dbReference type="RefSeq" id="NP_001085144.1">
    <property type="nucleotide sequence ID" value="NM_001091675.1"/>
</dbReference>
<dbReference type="SMR" id="Q6IND7"/>
<dbReference type="DNASU" id="432223"/>
<dbReference type="GeneID" id="432223"/>
<dbReference type="KEGG" id="xla:432223"/>
<dbReference type="AGR" id="Xenbase:XB-GENE-6078212"/>
<dbReference type="CTD" id="432223"/>
<dbReference type="Xenbase" id="XB-GENE-6078212">
    <property type="gene designation" value="lrp2bp.S"/>
</dbReference>
<dbReference type="OrthoDB" id="2384430at2759"/>
<dbReference type="Proteomes" id="UP000186698">
    <property type="component" value="Chromosome 1S"/>
</dbReference>
<dbReference type="Bgee" id="432223">
    <property type="expression patterns" value="Expressed in testis and 11 other cell types or tissues"/>
</dbReference>
<dbReference type="GO" id="GO:0005737">
    <property type="term" value="C:cytoplasm"/>
    <property type="evidence" value="ECO:0007669"/>
    <property type="project" value="UniProtKB-SubCell"/>
</dbReference>
<dbReference type="Gene3D" id="1.25.40.10">
    <property type="entry name" value="Tetratricopeptide repeat domain"/>
    <property type="match status" value="1"/>
</dbReference>
<dbReference type="InterPro" id="IPR052323">
    <property type="entry name" value="LRP2-binding"/>
</dbReference>
<dbReference type="InterPro" id="IPR006597">
    <property type="entry name" value="Sel1-like"/>
</dbReference>
<dbReference type="InterPro" id="IPR011990">
    <property type="entry name" value="TPR-like_helical_dom_sf"/>
</dbReference>
<dbReference type="PANTHER" id="PTHR44554">
    <property type="entry name" value="LRP2-BINDING PROTEIN"/>
    <property type="match status" value="1"/>
</dbReference>
<dbReference type="PANTHER" id="PTHR44554:SF1">
    <property type="entry name" value="LRP2-BINDING PROTEIN"/>
    <property type="match status" value="1"/>
</dbReference>
<dbReference type="Pfam" id="PF08238">
    <property type="entry name" value="Sel1"/>
    <property type="match status" value="5"/>
</dbReference>
<dbReference type="SMART" id="SM00671">
    <property type="entry name" value="SEL1"/>
    <property type="match status" value="6"/>
</dbReference>
<dbReference type="SUPFAM" id="SSF81901">
    <property type="entry name" value="HCP-like"/>
    <property type="match status" value="1"/>
</dbReference>
<organism>
    <name type="scientific">Xenopus laevis</name>
    <name type="common">African clawed frog</name>
    <dbReference type="NCBI Taxonomy" id="8355"/>
    <lineage>
        <taxon>Eukaryota</taxon>
        <taxon>Metazoa</taxon>
        <taxon>Chordata</taxon>
        <taxon>Craniata</taxon>
        <taxon>Vertebrata</taxon>
        <taxon>Euteleostomi</taxon>
        <taxon>Amphibia</taxon>
        <taxon>Batrachia</taxon>
        <taxon>Anura</taxon>
        <taxon>Pipoidea</taxon>
        <taxon>Pipidae</taxon>
        <taxon>Xenopodinae</taxon>
        <taxon>Xenopus</taxon>
        <taxon>Xenopus</taxon>
    </lineage>
</organism>
<protein>
    <recommendedName>
        <fullName>LRP2-binding protein</fullName>
    </recommendedName>
</protein>
<evidence type="ECO:0000250" key="1"/>
<feature type="chain" id="PRO_0000315712" description="LRP2-binding protein">
    <location>
        <begin position="1"/>
        <end position="341"/>
    </location>
</feature>
<feature type="repeat" description="TPR">
    <location>
        <begin position="56"/>
        <end position="89"/>
    </location>
</feature>
<feature type="repeat" description="Sel1-like 1">
    <location>
        <begin position="90"/>
        <end position="122"/>
    </location>
</feature>
<feature type="repeat" description="Sel1-like 2">
    <location>
        <begin position="130"/>
        <end position="165"/>
    </location>
</feature>
<feature type="repeat" description="Sel1-like 3">
    <location>
        <begin position="170"/>
        <end position="203"/>
    </location>
</feature>
<feature type="repeat" description="Sel1-like 4">
    <location>
        <begin position="204"/>
        <end position="239"/>
    </location>
</feature>
<feature type="repeat" description="Sel1-like 5">
    <location>
        <begin position="240"/>
        <end position="271"/>
    </location>
</feature>
<feature type="repeat" description="Sel1-like 6">
    <location>
        <begin position="291"/>
        <end position="326"/>
    </location>
</feature>
<reference key="1">
    <citation type="submission" date="2004-06" db="EMBL/GenBank/DDBJ databases">
        <authorList>
            <consortium name="NIH - Xenopus Gene Collection (XGC) project"/>
        </authorList>
    </citation>
    <scope>NUCLEOTIDE SEQUENCE [LARGE SCALE MRNA]</scope>
    <source>
        <tissue>Oocyte</tissue>
    </source>
</reference>